<protein>
    <recommendedName>
        <fullName>Protein tramtrack, alpha isoform</fullName>
    </recommendedName>
    <alternativeName>
        <fullName>Repressor protein fushi tarazu</fullName>
    </alternativeName>
    <alternativeName>
        <fullName>Tramtrack p88</fullName>
    </alternativeName>
</protein>
<feature type="chain" id="PRO_0000047078" description="Protein tramtrack, alpha isoform">
    <location>
        <begin position="1"/>
        <end position="813"/>
    </location>
</feature>
<feature type="domain" description="BTB" evidence="1">
    <location>
        <begin position="33"/>
        <end position="98"/>
    </location>
</feature>
<feature type="zinc finger region" description="C2H2-type 1" evidence="2">
    <location>
        <begin position="610"/>
        <end position="638"/>
    </location>
</feature>
<feature type="zinc finger region" description="C2H2-type 2" evidence="2">
    <location>
        <begin position="646"/>
        <end position="669"/>
    </location>
</feature>
<feature type="region of interest" description="Disordered" evidence="3">
    <location>
        <begin position="118"/>
        <end position="148"/>
    </location>
</feature>
<feature type="region of interest" description="Disordered" evidence="3">
    <location>
        <begin position="171"/>
        <end position="324"/>
    </location>
</feature>
<feature type="region of interest" description="Disordered" evidence="3">
    <location>
        <begin position="356"/>
        <end position="428"/>
    </location>
</feature>
<feature type="region of interest" description="Disordered" evidence="3">
    <location>
        <begin position="526"/>
        <end position="585"/>
    </location>
</feature>
<feature type="compositionally biased region" description="Low complexity" evidence="3">
    <location>
        <begin position="125"/>
        <end position="145"/>
    </location>
</feature>
<feature type="compositionally biased region" description="Polar residues" evidence="3">
    <location>
        <begin position="176"/>
        <end position="187"/>
    </location>
</feature>
<feature type="compositionally biased region" description="Basic residues" evidence="3">
    <location>
        <begin position="192"/>
        <end position="201"/>
    </location>
</feature>
<feature type="compositionally biased region" description="Basic and acidic residues" evidence="3">
    <location>
        <begin position="254"/>
        <end position="285"/>
    </location>
</feature>
<feature type="compositionally biased region" description="Polar residues" evidence="3">
    <location>
        <begin position="302"/>
        <end position="324"/>
    </location>
</feature>
<feature type="compositionally biased region" description="Polar residues" evidence="3">
    <location>
        <begin position="356"/>
        <end position="369"/>
    </location>
</feature>
<feature type="compositionally biased region" description="Polar residues" evidence="3">
    <location>
        <begin position="377"/>
        <end position="388"/>
    </location>
</feature>
<feature type="compositionally biased region" description="Basic residues" evidence="3">
    <location>
        <begin position="560"/>
        <end position="578"/>
    </location>
</feature>
<feature type="modified residue" description="Phosphoserine" evidence="6">
    <location>
        <position position="203"/>
    </location>
</feature>
<feature type="modified residue" description="Phosphoserine" evidence="6">
    <location>
        <position position="205"/>
    </location>
</feature>
<feature type="modified residue" description="Phosphoserine" evidence="6">
    <location>
        <position position="206"/>
    </location>
</feature>
<feature type="modified residue" description="Phosphothreonine" evidence="6">
    <location>
        <position position="209"/>
    </location>
</feature>
<feature type="modified residue" description="Phosphoserine" evidence="6">
    <location>
        <position position="682"/>
    </location>
</feature>
<feature type="sequence conflict" description="In Ref. 2; CAA77785/CAA77786." evidence="8" ref="2">
    <original>L</original>
    <variation>V</variation>
    <location>
        <position position="186"/>
    </location>
</feature>
<feature type="sequence conflict" description="In Ref. 1; CAA50633." evidence="8" ref="1">
    <original>P</original>
    <variation>R</variation>
    <location>
        <position position="358"/>
    </location>
</feature>
<feature type="sequence conflict" description="In Ref. 1; CAA50633." evidence="8" ref="1">
    <original>E</original>
    <variation>Q</variation>
    <location>
        <position position="524"/>
    </location>
</feature>
<name>TTKA_DROME</name>
<sequence>MKMASQRFCLRWNNHQSNLLSVFDQLLHAETFTDVTLAVEGQHLKAHKMVLSACSPYFNTLFVSHPEKHPIVILKDVPYSDMKSLLDFMYRGEVSVDQERLTAFLRVAESLRIKGLTEVNDDKPSPAAAAAGAGATGSESTATTPQLQRIQPYLVPQRNRSQAGGLLASAANAGNTPTLPVQPSLLSSALMPKRKRGRPRKLSGSSNGTGNDYDDFDRENMMNDSSDLGNGKMCNESYSGNDDGSDDNQPNAGHTDDLNESRDSLPSKRSKNSKDHRVVSHHEDNSTSVTPTKATPELSQRLFGSSSTTISATAPGGSSTGPSETISLLEISDERESAPVHLPTILGLKIRAINTTTPAQQGSPQTPTKSKPKIRQATGSNNSNSLLKQQLRGGAKDPEVPPATRITGAVTPNAALNAEEQSKEMPKKNQDEVNACIGLHSLANAAEQQAAQVASTGNLHHQLLLHMAANNSMLNTTDYYQQQQQESPSSAGQFMDDDLELLSLNDQQDKSDEPDHEMVTLADENAGLPGYQGNEAEATPAQEDSPAAETATAPPPAPRSGKKGAKRPIQRRRVRRKAQSTLDDQAEHLTEMSVRGLDLFRYASVVEGVYRCTECAKENMQKTFKNKYSFQRHAFLYHEGKHRKVFPCPVCSKEFSRPDKMKNHLKMTHENFTPPKDIGAFSPLKYLISAAAAGDMHATIYQQQQDHYHRQLAEQLEQQNASFDSRDSSLILPDVKMEHAEDQDAEQEAELSDGGYDASNPAAAAAAMLSLQQDVIIKDEIQISPSPSPTPPASCAVAEGKSLALASTAQTAT</sequence>
<dbReference type="EMBL" id="X71626">
    <property type="protein sequence ID" value="CAA50633.1"/>
    <property type="molecule type" value="mRNA"/>
</dbReference>
<dbReference type="EMBL" id="Z11723">
    <property type="protein sequence ID" value="CAA77785.1"/>
    <property type="molecule type" value="mRNA"/>
</dbReference>
<dbReference type="EMBL" id="Z11723">
    <property type="protein sequence ID" value="CAA77786.1"/>
    <property type="status" value="ALT_INIT"/>
    <property type="molecule type" value="mRNA"/>
</dbReference>
<dbReference type="EMBL" id="AE014297">
    <property type="protein sequence ID" value="AAF57179.1"/>
    <property type="molecule type" value="Genomic_DNA"/>
</dbReference>
<dbReference type="EMBL" id="AE014297">
    <property type="protein sequence ID" value="AAF57180.1"/>
    <property type="molecule type" value="Genomic_DNA"/>
</dbReference>
<dbReference type="EMBL" id="AE014297">
    <property type="protein sequence ID" value="AAN14282.1"/>
    <property type="molecule type" value="Genomic_DNA"/>
</dbReference>
<dbReference type="EMBL" id="BT025183">
    <property type="protein sequence ID" value="ABF00108.1"/>
    <property type="molecule type" value="mRNA"/>
</dbReference>
<dbReference type="PIR" id="S36018">
    <property type="entry name" value="S36018"/>
</dbReference>
<dbReference type="RefSeq" id="NP_001189329.1">
    <molecule id="P42282-1"/>
    <property type="nucleotide sequence ID" value="NM_001202400.1"/>
</dbReference>
<dbReference type="RefSeq" id="NP_733443.1">
    <molecule id="P42282-1"/>
    <property type="nucleotide sequence ID" value="NM_170564.3"/>
</dbReference>
<dbReference type="RefSeq" id="NP_733444.1">
    <molecule id="P42282-1"/>
    <property type="nucleotide sequence ID" value="NM_170565.2"/>
</dbReference>
<dbReference type="RefSeq" id="NP_733445.1">
    <molecule id="P42282-1"/>
    <property type="nucleotide sequence ID" value="NM_170566.3"/>
</dbReference>
<dbReference type="SMR" id="P42282"/>
<dbReference type="BioGRID" id="71315">
    <property type="interactions" value="104"/>
</dbReference>
<dbReference type="FunCoup" id="P42282">
    <property type="interactions" value="237"/>
</dbReference>
<dbReference type="IntAct" id="P42282">
    <property type="interactions" value="12"/>
</dbReference>
<dbReference type="STRING" id="7227.FBpp0085186"/>
<dbReference type="GlyGen" id="P42282">
    <property type="glycosylation" value="2 sites"/>
</dbReference>
<dbReference type="iPTMnet" id="P42282"/>
<dbReference type="PaxDb" id="7227-FBpp0085186"/>
<dbReference type="DNASU" id="48317"/>
<dbReference type="EnsemblMetazoa" id="FBtr0085825">
    <molecule id="P42282-1"/>
    <property type="protein sequence ID" value="FBpp0085186"/>
    <property type="gene ID" value="FBgn0003870"/>
</dbReference>
<dbReference type="EnsemblMetazoa" id="FBtr0085827">
    <molecule id="P42282-1"/>
    <property type="protein sequence ID" value="FBpp0085188"/>
    <property type="gene ID" value="FBgn0003870"/>
</dbReference>
<dbReference type="EnsemblMetazoa" id="FBtr0085829">
    <molecule id="P42282-1"/>
    <property type="protein sequence ID" value="FBpp0085190"/>
    <property type="gene ID" value="FBgn0003870"/>
</dbReference>
<dbReference type="EnsemblMetazoa" id="FBtr0303227">
    <molecule id="P42282-1"/>
    <property type="protein sequence ID" value="FBpp0292319"/>
    <property type="gene ID" value="FBgn0003870"/>
</dbReference>
<dbReference type="GeneID" id="48317"/>
<dbReference type="KEGG" id="dme:Dmel_CG1856"/>
<dbReference type="AGR" id="FB:FBgn0003870"/>
<dbReference type="CTD" id="7272"/>
<dbReference type="FlyBase" id="FBgn0003870">
    <property type="gene designation" value="ttk"/>
</dbReference>
<dbReference type="VEuPathDB" id="VectorBase:FBgn0003870"/>
<dbReference type="eggNOG" id="ENOG502QQPP">
    <property type="taxonomic scope" value="Eukaryota"/>
</dbReference>
<dbReference type="GeneTree" id="ENSGT00940000175057"/>
<dbReference type="HOGENOM" id="CLU_013670_1_0_1"/>
<dbReference type="InParanoid" id="P42282"/>
<dbReference type="OrthoDB" id="19132at2759"/>
<dbReference type="PhylomeDB" id="P42282"/>
<dbReference type="SignaLink" id="P42282"/>
<dbReference type="BioGRID-ORCS" id="48317">
    <property type="hits" value="0 hits in 1 CRISPR screen"/>
</dbReference>
<dbReference type="GenomeRNAi" id="48317"/>
<dbReference type="Proteomes" id="UP000000803">
    <property type="component" value="Chromosome 3R"/>
</dbReference>
<dbReference type="Bgee" id="FBgn0003870">
    <property type="expression patterns" value="Expressed in polar follicle cell (Drosophila) in ovary and 226 other cell types or tissues"/>
</dbReference>
<dbReference type="ExpressionAtlas" id="P42282">
    <property type="expression patterns" value="baseline and differential"/>
</dbReference>
<dbReference type="GO" id="GO:0005634">
    <property type="term" value="C:nucleus"/>
    <property type="evidence" value="ECO:0000314"/>
    <property type="project" value="FlyBase"/>
</dbReference>
<dbReference type="GO" id="GO:0005700">
    <property type="term" value="C:polytene chromosome"/>
    <property type="evidence" value="ECO:0000314"/>
    <property type="project" value="FlyBase"/>
</dbReference>
<dbReference type="GO" id="GO:0017053">
    <property type="term" value="C:transcription repressor complex"/>
    <property type="evidence" value="ECO:0000353"/>
    <property type="project" value="FlyBase"/>
</dbReference>
<dbReference type="GO" id="GO:0003677">
    <property type="term" value="F:DNA binding"/>
    <property type="evidence" value="ECO:0000314"/>
    <property type="project" value="FlyBase"/>
</dbReference>
<dbReference type="GO" id="GO:0001227">
    <property type="term" value="F:DNA-binding transcription repressor activity, RNA polymerase II-specific"/>
    <property type="evidence" value="ECO:0000314"/>
    <property type="project" value="FlyBase"/>
</dbReference>
<dbReference type="GO" id="GO:0031208">
    <property type="term" value="F:POZ domain binding"/>
    <property type="evidence" value="ECO:0000314"/>
    <property type="project" value="FlyBase"/>
</dbReference>
<dbReference type="GO" id="GO:0042803">
    <property type="term" value="F:protein homodimerization activity"/>
    <property type="evidence" value="ECO:0000314"/>
    <property type="project" value="FlyBase"/>
</dbReference>
<dbReference type="GO" id="GO:0000978">
    <property type="term" value="F:RNA polymerase II cis-regulatory region sequence-specific DNA binding"/>
    <property type="evidence" value="ECO:0000314"/>
    <property type="project" value="FlyBase"/>
</dbReference>
<dbReference type="GO" id="GO:0008270">
    <property type="term" value="F:zinc ion binding"/>
    <property type="evidence" value="ECO:0007669"/>
    <property type="project" value="UniProtKB-KW"/>
</dbReference>
<dbReference type="GO" id="GO:0035147">
    <property type="term" value="P:branch fusion, open tracheal system"/>
    <property type="evidence" value="ECO:0000315"/>
    <property type="project" value="FlyBase"/>
</dbReference>
<dbReference type="GO" id="GO:0060446">
    <property type="term" value="P:branching involved in open tracheal system development"/>
    <property type="evidence" value="ECO:0000315"/>
    <property type="project" value="FlyBase"/>
</dbReference>
<dbReference type="GO" id="GO:0040003">
    <property type="term" value="P:chitin-based cuticle development"/>
    <property type="evidence" value="ECO:0000315"/>
    <property type="project" value="FlyBase"/>
</dbReference>
<dbReference type="GO" id="GO:0042675">
    <property type="term" value="P:compound eye cone cell differentiation"/>
    <property type="evidence" value="ECO:0000315"/>
    <property type="project" value="FlyBase"/>
</dbReference>
<dbReference type="GO" id="GO:0048750">
    <property type="term" value="P:compound eye corneal lens morphogenesis"/>
    <property type="evidence" value="ECO:0000315"/>
    <property type="project" value="FlyBase"/>
</dbReference>
<dbReference type="GO" id="GO:0031104">
    <property type="term" value="P:dendrite regeneration"/>
    <property type="evidence" value="ECO:0000315"/>
    <property type="project" value="FlyBase"/>
</dbReference>
<dbReference type="GO" id="GO:0046843">
    <property type="term" value="P:dorsal appendage formation"/>
    <property type="evidence" value="ECO:0000315"/>
    <property type="project" value="FlyBase"/>
</dbReference>
<dbReference type="GO" id="GO:0035001">
    <property type="term" value="P:dorsal trunk growth, open tracheal system"/>
    <property type="evidence" value="ECO:0000315"/>
    <property type="project" value="FlyBase"/>
</dbReference>
<dbReference type="GO" id="GO:0007307">
    <property type="term" value="P:eggshell chorion gene amplification"/>
    <property type="evidence" value="ECO:0000315"/>
    <property type="project" value="FlyBase"/>
</dbReference>
<dbReference type="GO" id="GO:0035883">
    <property type="term" value="P:enteroendocrine cell differentiation"/>
    <property type="evidence" value="ECO:0000315"/>
    <property type="project" value="FlyBase"/>
</dbReference>
<dbReference type="GO" id="GO:0007173">
    <property type="term" value="P:epidermal growth factor receptor signaling pathway"/>
    <property type="evidence" value="ECO:0000316"/>
    <property type="project" value="FlyBase"/>
</dbReference>
<dbReference type="GO" id="GO:0030707">
    <property type="term" value="P:follicle cell of egg chamber development"/>
    <property type="evidence" value="ECO:0000315"/>
    <property type="project" value="FlyBase"/>
</dbReference>
<dbReference type="GO" id="GO:0048626">
    <property type="term" value="P:myoblast fate specification"/>
    <property type="evidence" value="ECO:0000315"/>
    <property type="project" value="FlyBase"/>
</dbReference>
<dbReference type="GO" id="GO:0045892">
    <property type="term" value="P:negative regulation of DNA-templated transcription"/>
    <property type="evidence" value="ECO:0000314"/>
    <property type="project" value="FlyBase"/>
</dbReference>
<dbReference type="GO" id="GO:0046533">
    <property type="term" value="P:negative regulation of photoreceptor cell differentiation"/>
    <property type="evidence" value="ECO:0000315"/>
    <property type="project" value="FlyBase"/>
</dbReference>
<dbReference type="GO" id="GO:0045677">
    <property type="term" value="P:negative regulation of R7 cell differentiation"/>
    <property type="evidence" value="ECO:0000315"/>
    <property type="project" value="FlyBase"/>
</dbReference>
<dbReference type="GO" id="GO:0000122">
    <property type="term" value="P:negative regulation of transcription by RNA polymerase II"/>
    <property type="evidence" value="ECO:0000315"/>
    <property type="project" value="FlyBase"/>
</dbReference>
<dbReference type="GO" id="GO:0007422">
    <property type="term" value="P:peripheral nervous system development"/>
    <property type="evidence" value="ECO:0000304"/>
    <property type="project" value="FlyBase"/>
</dbReference>
<dbReference type="GO" id="GO:1903688">
    <property type="term" value="P:positive regulation of border follicle cell migration"/>
    <property type="evidence" value="ECO:0000315"/>
    <property type="project" value="FlyBase"/>
</dbReference>
<dbReference type="GO" id="GO:0045944">
    <property type="term" value="P:positive regulation of transcription by RNA polymerase II"/>
    <property type="evidence" value="ECO:0000314"/>
    <property type="project" value="FlyBase"/>
</dbReference>
<dbReference type="GO" id="GO:0048053">
    <property type="term" value="P:R1/R6 development"/>
    <property type="evidence" value="ECO:0000315"/>
    <property type="project" value="FlyBase"/>
</dbReference>
<dbReference type="GO" id="GO:0008360">
    <property type="term" value="P:regulation of cell shape"/>
    <property type="evidence" value="ECO:0000315"/>
    <property type="project" value="FlyBase"/>
</dbReference>
<dbReference type="GO" id="GO:0042682">
    <property type="term" value="P:regulation of compound eye cone cell fate specification"/>
    <property type="evidence" value="ECO:0000315"/>
    <property type="project" value="FlyBase"/>
</dbReference>
<dbReference type="GO" id="GO:0016476">
    <property type="term" value="P:regulation of embryonic cell shape"/>
    <property type="evidence" value="ECO:0000315"/>
    <property type="project" value="FlyBase"/>
</dbReference>
<dbReference type="GO" id="GO:0006357">
    <property type="term" value="P:regulation of transcription by RNA polymerase II"/>
    <property type="evidence" value="ECO:0000318"/>
    <property type="project" value="GO_Central"/>
</dbReference>
<dbReference type="GO" id="GO:0035151">
    <property type="term" value="P:regulation of tube size, open tracheal system"/>
    <property type="evidence" value="ECO:0000315"/>
    <property type="project" value="FlyBase"/>
</dbReference>
<dbReference type="GO" id="GO:0045500">
    <property type="term" value="P:sevenless signaling pathway"/>
    <property type="evidence" value="ECO:0000353"/>
    <property type="project" value="FlyBase"/>
</dbReference>
<dbReference type="GO" id="GO:0007426">
    <property type="term" value="P:tracheal outgrowth, open tracheal system"/>
    <property type="evidence" value="ECO:0000315"/>
    <property type="project" value="FlyBase"/>
</dbReference>
<dbReference type="CDD" id="cd18315">
    <property type="entry name" value="BTB_POZ_BAB-like"/>
    <property type="match status" value="1"/>
</dbReference>
<dbReference type="FunFam" id="3.30.710.10:FF:000091">
    <property type="entry name" value="Lola, isoform F"/>
    <property type="match status" value="1"/>
</dbReference>
<dbReference type="Gene3D" id="3.30.160.60">
    <property type="entry name" value="Classic Zinc Finger"/>
    <property type="match status" value="1"/>
</dbReference>
<dbReference type="Gene3D" id="3.30.710.10">
    <property type="entry name" value="Potassium Channel Kv1.1, Chain A"/>
    <property type="match status" value="1"/>
</dbReference>
<dbReference type="InterPro" id="IPR000210">
    <property type="entry name" value="BTB/POZ_dom"/>
</dbReference>
<dbReference type="InterPro" id="IPR051095">
    <property type="entry name" value="Dros_DevTransReg"/>
</dbReference>
<dbReference type="InterPro" id="IPR011333">
    <property type="entry name" value="SKP1/BTB/POZ_sf"/>
</dbReference>
<dbReference type="InterPro" id="IPR036236">
    <property type="entry name" value="Znf_C2H2_sf"/>
</dbReference>
<dbReference type="InterPro" id="IPR013087">
    <property type="entry name" value="Znf_C2H2_type"/>
</dbReference>
<dbReference type="PANTHER" id="PTHR23110">
    <property type="entry name" value="BTB DOMAIN TRANSCRIPTION FACTOR"/>
    <property type="match status" value="1"/>
</dbReference>
<dbReference type="PANTHER" id="PTHR23110:SF82">
    <property type="entry name" value="PROTEIN TRAMTRACK, ALPHA ISOFORM"/>
    <property type="match status" value="1"/>
</dbReference>
<dbReference type="Pfam" id="PF00651">
    <property type="entry name" value="BTB"/>
    <property type="match status" value="1"/>
</dbReference>
<dbReference type="SMART" id="SM00225">
    <property type="entry name" value="BTB"/>
    <property type="match status" value="1"/>
</dbReference>
<dbReference type="SMART" id="SM00355">
    <property type="entry name" value="ZnF_C2H2"/>
    <property type="match status" value="2"/>
</dbReference>
<dbReference type="SUPFAM" id="SSF57667">
    <property type="entry name" value="beta-beta-alpha zinc fingers"/>
    <property type="match status" value="1"/>
</dbReference>
<dbReference type="SUPFAM" id="SSF54695">
    <property type="entry name" value="POZ domain"/>
    <property type="match status" value="1"/>
</dbReference>
<dbReference type="PROSITE" id="PS50097">
    <property type="entry name" value="BTB"/>
    <property type="match status" value="1"/>
</dbReference>
<dbReference type="PROSITE" id="PS00028">
    <property type="entry name" value="ZINC_FINGER_C2H2_1"/>
    <property type="match status" value="1"/>
</dbReference>
<dbReference type="PROSITE" id="PS50157">
    <property type="entry name" value="ZINC_FINGER_C2H2_2"/>
    <property type="match status" value="1"/>
</dbReference>
<organism>
    <name type="scientific">Drosophila melanogaster</name>
    <name type="common">Fruit fly</name>
    <dbReference type="NCBI Taxonomy" id="7227"/>
    <lineage>
        <taxon>Eukaryota</taxon>
        <taxon>Metazoa</taxon>
        <taxon>Ecdysozoa</taxon>
        <taxon>Arthropoda</taxon>
        <taxon>Hexapoda</taxon>
        <taxon>Insecta</taxon>
        <taxon>Pterygota</taxon>
        <taxon>Neoptera</taxon>
        <taxon>Endopterygota</taxon>
        <taxon>Diptera</taxon>
        <taxon>Brachycera</taxon>
        <taxon>Muscomorpha</taxon>
        <taxon>Ephydroidea</taxon>
        <taxon>Drosophilidae</taxon>
        <taxon>Drosophila</taxon>
        <taxon>Sophophora</taxon>
    </lineage>
</organism>
<keyword id="KW-0025">Alternative splicing</keyword>
<keyword id="KW-0238">DNA-binding</keyword>
<keyword id="KW-0479">Metal-binding</keyword>
<keyword id="KW-0539">Nucleus</keyword>
<keyword id="KW-0597">Phosphoprotein</keyword>
<keyword id="KW-1185">Reference proteome</keyword>
<keyword id="KW-0677">Repeat</keyword>
<keyword id="KW-0804">Transcription</keyword>
<keyword id="KW-0805">Transcription regulation</keyword>
<keyword id="KW-0862">Zinc</keyword>
<keyword id="KW-0863">Zinc-finger</keyword>
<accession>P42282</accession>
<accession>A4V3Q3</accession>
<accession>Q0KHY0</accession>
<accession>Q1LZ43</accession>
<accession>Q24313</accession>
<accession>Q9V9V2</accession>
<comment type="function">
    <text evidence="5 7">Binds to a number of sites in the transcriptional regulatory region of ftz. Isoform alpha is required to repress genes that promote the R7 cell fate. Probable repressor of the transcription of the segmentation genes ftz, eve, h, odd, run, and en. May bind to the region 5'-AGGG[CT]GG-3'. Degradation of ttk is directed by binding of sinah or sina, via the adapter molecule phyl which binds to the BTB domain of ttk.</text>
</comment>
<comment type="subunit">
    <text evidence="4 5">Interacts with CoRest/CG33525, suggesting that it acts by recruiting a CoRest-containing corepressor complex. Interacts with phyl.</text>
</comment>
<comment type="interaction">
    <interactant intactId="EBI-77008">
        <id>P42282</id>
    </interactant>
    <interactant intactId="EBI-421390">
        <id>Q95RJ9</id>
        <label>ebi</label>
    </interactant>
    <organismsDiffer>false</organismsDiffer>
    <experiments>2</experiments>
</comment>
<comment type="interaction">
    <interactant intactId="EBI-77008">
        <id>P42282</id>
    </interactant>
    <interactant intactId="EBI-77033">
        <id>Q27934</id>
        <label>phyl</label>
    </interactant>
    <organismsDiffer>false</organismsDiffer>
    <experiments>10</experiments>
</comment>
<comment type="interaction">
    <interactant intactId="EBI-77008">
        <id>P42282</id>
    </interactant>
    <interactant intactId="EBI-77019">
        <id>P21461</id>
        <label>sina</label>
    </interactant>
    <organismsDiffer>false</organismsDiffer>
    <experiments>4</experiments>
</comment>
<comment type="subcellular location">
    <subcellularLocation>
        <location evidence="8">Nucleus</location>
    </subcellularLocation>
</comment>
<comment type="alternative products">
    <event type="alternative splicing"/>
    <isoform>
        <id>P42282-1</id>
        <name>Alpha</name>
        <name>p88</name>
        <name>A</name>
        <name>E</name>
        <sequence type="displayed"/>
    </isoform>
    <isoform>
        <id>P17789-1</id>
        <name>Beta</name>
        <name>p69</name>
        <name>C</name>
        <name>D</name>
        <name>F</name>
        <sequence type="external"/>
    </isoform>
</comment>
<comment type="developmental stage">
    <text>Expressed both maternally and zygotically. Expressed in preblastoderm embryos, followed by complete decay upon formation of the cellular blastoderm when ftz striped expression is at its peak.</text>
</comment>
<comment type="caution">
    <text evidence="8">It is uncertain whether Met-1 or Met-3 is the initiator.</text>
</comment>
<comment type="sequence caution" evidence="8">
    <conflict type="erroneous initiation">
        <sequence resource="EMBL-CDS" id="CAA77786"/>
    </conflict>
    <text>Truncated N-terminus.</text>
</comment>
<evidence type="ECO:0000255" key="1">
    <source>
        <dbReference type="PROSITE-ProRule" id="PRU00037"/>
    </source>
</evidence>
<evidence type="ECO:0000255" key="2">
    <source>
        <dbReference type="PROSITE-ProRule" id="PRU00042"/>
    </source>
</evidence>
<evidence type="ECO:0000256" key="3">
    <source>
        <dbReference type="SAM" id="MobiDB-lite"/>
    </source>
</evidence>
<evidence type="ECO:0000269" key="4">
    <source>
    </source>
</evidence>
<evidence type="ECO:0000269" key="5">
    <source>
    </source>
</evidence>
<evidence type="ECO:0000269" key="6">
    <source>
    </source>
</evidence>
<evidence type="ECO:0000269" key="7">
    <source>
    </source>
</evidence>
<evidence type="ECO:0000305" key="8"/>
<gene>
    <name type="primary">ttk</name>
    <name type="synonym">FTZ-F2</name>
    <name type="ORF">CG1856</name>
</gene>
<proteinExistence type="evidence at protein level"/>
<reference key="1">
    <citation type="journal article" date="1993" name="Genes Dev.">
        <title>Tramtrack is a transcriptional repressor required for cell fate determination in the Drosophila eye.</title>
        <authorList>
            <person name="Xiong W.C."/>
            <person name="Montell C."/>
        </authorList>
    </citation>
    <scope>NUCLEOTIDE SEQUENCE [MRNA]</scope>
    <scope>FUNCTION</scope>
</reference>
<reference key="2">
    <citation type="journal article" date="1992" name="EMBO J.">
        <title>Alternatively spliced transcripts of the Drosophila tramtrack gene encode zinc finger proteins with distinct DNA binding specificities.</title>
        <authorList>
            <person name="Read D."/>
            <person name="Manley J.L."/>
        </authorList>
    </citation>
    <scope>NUCLEOTIDE SEQUENCE [MRNA]</scope>
    <scope>DNA-BINDING</scope>
    <source>
        <tissue>Embryo</tissue>
    </source>
</reference>
<reference key="3">
    <citation type="journal article" date="2000" name="Science">
        <title>The genome sequence of Drosophila melanogaster.</title>
        <authorList>
            <person name="Adams M.D."/>
            <person name="Celniker S.E."/>
            <person name="Holt R.A."/>
            <person name="Evans C.A."/>
            <person name="Gocayne J.D."/>
            <person name="Amanatides P.G."/>
            <person name="Scherer S.E."/>
            <person name="Li P.W."/>
            <person name="Hoskins R.A."/>
            <person name="Galle R.F."/>
            <person name="George R.A."/>
            <person name="Lewis S.E."/>
            <person name="Richards S."/>
            <person name="Ashburner M."/>
            <person name="Henderson S.N."/>
            <person name="Sutton G.G."/>
            <person name="Wortman J.R."/>
            <person name="Yandell M.D."/>
            <person name="Zhang Q."/>
            <person name="Chen L.X."/>
            <person name="Brandon R.C."/>
            <person name="Rogers Y.-H.C."/>
            <person name="Blazej R.G."/>
            <person name="Champe M."/>
            <person name="Pfeiffer B.D."/>
            <person name="Wan K.H."/>
            <person name="Doyle C."/>
            <person name="Baxter E.G."/>
            <person name="Helt G."/>
            <person name="Nelson C.R."/>
            <person name="Miklos G.L.G."/>
            <person name="Abril J.F."/>
            <person name="Agbayani A."/>
            <person name="An H.-J."/>
            <person name="Andrews-Pfannkoch C."/>
            <person name="Baldwin D."/>
            <person name="Ballew R.M."/>
            <person name="Basu A."/>
            <person name="Baxendale J."/>
            <person name="Bayraktaroglu L."/>
            <person name="Beasley E.M."/>
            <person name="Beeson K.Y."/>
            <person name="Benos P.V."/>
            <person name="Berman B.P."/>
            <person name="Bhandari D."/>
            <person name="Bolshakov S."/>
            <person name="Borkova D."/>
            <person name="Botchan M.R."/>
            <person name="Bouck J."/>
            <person name="Brokstein P."/>
            <person name="Brottier P."/>
            <person name="Burtis K.C."/>
            <person name="Busam D.A."/>
            <person name="Butler H."/>
            <person name="Cadieu E."/>
            <person name="Center A."/>
            <person name="Chandra I."/>
            <person name="Cherry J.M."/>
            <person name="Cawley S."/>
            <person name="Dahlke C."/>
            <person name="Davenport L.B."/>
            <person name="Davies P."/>
            <person name="de Pablos B."/>
            <person name="Delcher A."/>
            <person name="Deng Z."/>
            <person name="Mays A.D."/>
            <person name="Dew I."/>
            <person name="Dietz S.M."/>
            <person name="Dodson K."/>
            <person name="Doup L.E."/>
            <person name="Downes M."/>
            <person name="Dugan-Rocha S."/>
            <person name="Dunkov B.C."/>
            <person name="Dunn P."/>
            <person name="Durbin K.J."/>
            <person name="Evangelista C.C."/>
            <person name="Ferraz C."/>
            <person name="Ferriera S."/>
            <person name="Fleischmann W."/>
            <person name="Fosler C."/>
            <person name="Gabrielian A.E."/>
            <person name="Garg N.S."/>
            <person name="Gelbart W.M."/>
            <person name="Glasser K."/>
            <person name="Glodek A."/>
            <person name="Gong F."/>
            <person name="Gorrell J.H."/>
            <person name="Gu Z."/>
            <person name="Guan P."/>
            <person name="Harris M."/>
            <person name="Harris N.L."/>
            <person name="Harvey D.A."/>
            <person name="Heiman T.J."/>
            <person name="Hernandez J.R."/>
            <person name="Houck J."/>
            <person name="Hostin D."/>
            <person name="Houston K.A."/>
            <person name="Howland T.J."/>
            <person name="Wei M.-H."/>
            <person name="Ibegwam C."/>
            <person name="Jalali M."/>
            <person name="Kalush F."/>
            <person name="Karpen G.H."/>
            <person name="Ke Z."/>
            <person name="Kennison J.A."/>
            <person name="Ketchum K.A."/>
            <person name="Kimmel B.E."/>
            <person name="Kodira C.D."/>
            <person name="Kraft C.L."/>
            <person name="Kravitz S."/>
            <person name="Kulp D."/>
            <person name="Lai Z."/>
            <person name="Lasko P."/>
            <person name="Lei Y."/>
            <person name="Levitsky A.A."/>
            <person name="Li J.H."/>
            <person name="Li Z."/>
            <person name="Liang Y."/>
            <person name="Lin X."/>
            <person name="Liu X."/>
            <person name="Mattei B."/>
            <person name="McIntosh T.C."/>
            <person name="McLeod M.P."/>
            <person name="McPherson D."/>
            <person name="Merkulov G."/>
            <person name="Milshina N.V."/>
            <person name="Mobarry C."/>
            <person name="Morris J."/>
            <person name="Moshrefi A."/>
            <person name="Mount S.M."/>
            <person name="Moy M."/>
            <person name="Murphy B."/>
            <person name="Murphy L."/>
            <person name="Muzny D.M."/>
            <person name="Nelson D.L."/>
            <person name="Nelson D.R."/>
            <person name="Nelson K.A."/>
            <person name="Nixon K."/>
            <person name="Nusskern D.R."/>
            <person name="Pacleb J.M."/>
            <person name="Palazzolo M."/>
            <person name="Pittman G.S."/>
            <person name="Pan S."/>
            <person name="Pollard J."/>
            <person name="Puri V."/>
            <person name="Reese M.G."/>
            <person name="Reinert K."/>
            <person name="Remington K."/>
            <person name="Saunders R.D.C."/>
            <person name="Scheeler F."/>
            <person name="Shen H."/>
            <person name="Shue B.C."/>
            <person name="Siden-Kiamos I."/>
            <person name="Simpson M."/>
            <person name="Skupski M.P."/>
            <person name="Smith T.J."/>
            <person name="Spier E."/>
            <person name="Spradling A.C."/>
            <person name="Stapleton M."/>
            <person name="Strong R."/>
            <person name="Sun E."/>
            <person name="Svirskas R."/>
            <person name="Tector C."/>
            <person name="Turner R."/>
            <person name="Venter E."/>
            <person name="Wang A.H."/>
            <person name="Wang X."/>
            <person name="Wang Z.-Y."/>
            <person name="Wassarman D.A."/>
            <person name="Weinstock G.M."/>
            <person name="Weissenbach J."/>
            <person name="Williams S.M."/>
            <person name="Woodage T."/>
            <person name="Worley K.C."/>
            <person name="Wu D."/>
            <person name="Yang S."/>
            <person name="Yao Q.A."/>
            <person name="Ye J."/>
            <person name="Yeh R.-F."/>
            <person name="Zaveri J.S."/>
            <person name="Zhan M."/>
            <person name="Zhang G."/>
            <person name="Zhao Q."/>
            <person name="Zheng L."/>
            <person name="Zheng X.H."/>
            <person name="Zhong F.N."/>
            <person name="Zhong W."/>
            <person name="Zhou X."/>
            <person name="Zhu S.C."/>
            <person name="Zhu X."/>
            <person name="Smith H.O."/>
            <person name="Gibbs R.A."/>
            <person name="Myers E.W."/>
            <person name="Rubin G.M."/>
            <person name="Venter J.C."/>
        </authorList>
    </citation>
    <scope>NUCLEOTIDE SEQUENCE [LARGE SCALE GENOMIC DNA]</scope>
    <source>
        <strain>Berkeley</strain>
    </source>
</reference>
<reference key="4">
    <citation type="journal article" date="2002" name="Genome Biol.">
        <title>Annotation of the Drosophila melanogaster euchromatic genome: a systematic review.</title>
        <authorList>
            <person name="Misra S."/>
            <person name="Crosby M.A."/>
            <person name="Mungall C.J."/>
            <person name="Matthews B.B."/>
            <person name="Campbell K.S."/>
            <person name="Hradecky P."/>
            <person name="Huang Y."/>
            <person name="Kaminker J.S."/>
            <person name="Millburn G.H."/>
            <person name="Prochnik S.E."/>
            <person name="Smith C.D."/>
            <person name="Tupy J.L."/>
            <person name="Whitfield E.J."/>
            <person name="Bayraktaroglu L."/>
            <person name="Berman B.P."/>
            <person name="Bettencourt B.R."/>
            <person name="Celniker S.E."/>
            <person name="de Grey A.D.N.J."/>
            <person name="Drysdale R.A."/>
            <person name="Harris N.L."/>
            <person name="Richter J."/>
            <person name="Russo S."/>
            <person name="Schroeder A.J."/>
            <person name="Shu S.Q."/>
            <person name="Stapleton M."/>
            <person name="Yamada C."/>
            <person name="Ashburner M."/>
            <person name="Gelbart W.M."/>
            <person name="Rubin G.M."/>
            <person name="Lewis S.E."/>
        </authorList>
    </citation>
    <scope>GENOME REANNOTATION</scope>
    <scope>ALTERNATIVE SPLICING</scope>
    <source>
        <strain>Berkeley</strain>
    </source>
</reference>
<reference key="5">
    <citation type="submission" date="2006-04" db="EMBL/GenBank/DDBJ databases">
        <authorList>
            <person name="Stapleton M."/>
            <person name="Carlson J.W."/>
            <person name="Chavez C."/>
            <person name="Frise E."/>
            <person name="George R.A."/>
            <person name="Pacleb J.M."/>
            <person name="Park S."/>
            <person name="Wan K.H."/>
            <person name="Yu C."/>
            <person name="Celniker S.E."/>
        </authorList>
    </citation>
    <scope>NUCLEOTIDE SEQUENCE [LARGE SCALE MRNA] OF 1-487</scope>
    <source>
        <strain>Berkeley</strain>
    </source>
</reference>
<reference key="6">
    <citation type="journal article" date="2004" name="J. Neurosci.">
        <title>A conserved role but different partners for the transcriptional corepressor CoREST in fly and mammalian nervous system formation.</title>
        <authorList>
            <person name="Dallman J.E."/>
            <person name="Allopenna J."/>
            <person name="Bassett A."/>
            <person name="Travers A."/>
            <person name="Mandel G."/>
        </authorList>
    </citation>
    <scope>INTERACTION WITH CG33525</scope>
</reference>
<reference key="7">
    <citation type="journal article" date="2008" name="J. Biol. Chem.">
        <title>Two modes of degradation of the tramtrack transcription factors by Siah homologues.</title>
        <authorList>
            <person name="Cooper S.E."/>
            <person name="Murawsky C.M."/>
            <person name="Lowe N."/>
            <person name="Travers A.A."/>
        </authorList>
    </citation>
    <scope>FUNCTION</scope>
    <scope>INTERACTION WITH PHYL</scope>
</reference>
<reference key="8">
    <citation type="journal article" date="2008" name="J. Proteome Res.">
        <title>Phosphoproteome analysis of Drosophila melanogaster embryos.</title>
        <authorList>
            <person name="Zhai B."/>
            <person name="Villen J."/>
            <person name="Beausoleil S.A."/>
            <person name="Mintseris J."/>
            <person name="Gygi S.P."/>
        </authorList>
    </citation>
    <scope>PHOSPHORYLATION [LARGE SCALE ANALYSIS] AT SER-203; SER-205; SER-206; THR-209 AND SER-682</scope>
    <scope>IDENTIFICATION BY MASS SPECTROMETRY</scope>
    <source>
        <tissue>Embryo</tissue>
    </source>
</reference>